<evidence type="ECO:0000255" key="1">
    <source>
        <dbReference type="HAMAP-Rule" id="MF_01217"/>
    </source>
</evidence>
<evidence type="ECO:0000255" key="2">
    <source>
        <dbReference type="PROSITE-ProRule" id="PRU00258"/>
    </source>
</evidence>
<organism>
    <name type="scientific">Prochlorococcus marinus (strain MIT 9312)</name>
    <dbReference type="NCBI Taxonomy" id="74546"/>
    <lineage>
        <taxon>Bacteria</taxon>
        <taxon>Bacillati</taxon>
        <taxon>Cyanobacteriota</taxon>
        <taxon>Cyanophyceae</taxon>
        <taxon>Synechococcales</taxon>
        <taxon>Prochlorococcaceae</taxon>
        <taxon>Prochlorococcus</taxon>
    </lineage>
</organism>
<protein>
    <recommendedName>
        <fullName evidence="1">Acyl carrier protein</fullName>
        <shortName evidence="1">ACP</shortName>
    </recommendedName>
</protein>
<feature type="chain" id="PRO_1000066655" description="Acyl carrier protein">
    <location>
        <begin position="1"/>
        <end position="79"/>
    </location>
</feature>
<feature type="domain" description="Carrier" evidence="2">
    <location>
        <begin position="3"/>
        <end position="78"/>
    </location>
</feature>
<feature type="modified residue" description="O-(pantetheine 4'-phosphoryl)serine" evidence="2">
    <location>
        <position position="38"/>
    </location>
</feature>
<proteinExistence type="inferred from homology"/>
<sequence>MSQEILEKVCSIVSEQLSVEAAEVKSDSNFQNDLGADSLDTVELVMALEEAFDIEIPDEAAEGIATVGDAVKFIEEKKG</sequence>
<reference key="1">
    <citation type="journal article" date="2006" name="Science">
        <title>Genomic islands and the ecology and evolution of Prochlorococcus.</title>
        <authorList>
            <person name="Coleman M.L."/>
            <person name="Sullivan M.B."/>
            <person name="Martiny A.C."/>
            <person name="Steglich C."/>
            <person name="Barry K."/>
            <person name="Delong E.F."/>
            <person name="Chisholm S.W."/>
        </authorList>
    </citation>
    <scope>NUCLEOTIDE SEQUENCE [LARGE SCALE GENOMIC DNA]</scope>
    <source>
        <strain>MIT 9312</strain>
    </source>
</reference>
<keyword id="KW-0963">Cytoplasm</keyword>
<keyword id="KW-0275">Fatty acid biosynthesis</keyword>
<keyword id="KW-0276">Fatty acid metabolism</keyword>
<keyword id="KW-0444">Lipid biosynthesis</keyword>
<keyword id="KW-0443">Lipid metabolism</keyword>
<keyword id="KW-0596">Phosphopantetheine</keyword>
<keyword id="KW-0597">Phosphoprotein</keyword>
<accession>Q318D3</accession>
<gene>
    <name evidence="1" type="primary">acpP</name>
    <name type="ordered locus">PMT9312_1701</name>
</gene>
<comment type="function">
    <text evidence="1">Carrier of the growing fatty acid chain in fatty acid biosynthesis.</text>
</comment>
<comment type="pathway">
    <text evidence="1">Lipid metabolism; fatty acid biosynthesis.</text>
</comment>
<comment type="subcellular location">
    <subcellularLocation>
        <location evidence="1">Cytoplasm</location>
    </subcellularLocation>
</comment>
<comment type="PTM">
    <text evidence="1">4'-phosphopantetheine is transferred from CoA to a specific serine of apo-ACP by AcpS. This modification is essential for activity because fatty acids are bound in thioester linkage to the sulfhydryl of the prosthetic group.</text>
</comment>
<comment type="similarity">
    <text evidence="1">Belongs to the acyl carrier protein (ACP) family.</text>
</comment>
<name>ACP_PROM9</name>
<dbReference type="EMBL" id="CP000111">
    <property type="protein sequence ID" value="ABB50762.1"/>
    <property type="molecule type" value="Genomic_DNA"/>
</dbReference>
<dbReference type="RefSeq" id="WP_011377243.1">
    <property type="nucleotide sequence ID" value="NC_007577.1"/>
</dbReference>
<dbReference type="SMR" id="Q318D3"/>
<dbReference type="STRING" id="74546.PMT9312_1701"/>
<dbReference type="KEGG" id="pmi:PMT9312_1701"/>
<dbReference type="eggNOG" id="COG0236">
    <property type="taxonomic scope" value="Bacteria"/>
</dbReference>
<dbReference type="HOGENOM" id="CLU_108696_5_1_3"/>
<dbReference type="OrthoDB" id="9804551at2"/>
<dbReference type="UniPathway" id="UPA00094"/>
<dbReference type="Proteomes" id="UP000002715">
    <property type="component" value="Chromosome"/>
</dbReference>
<dbReference type="GO" id="GO:0005829">
    <property type="term" value="C:cytosol"/>
    <property type="evidence" value="ECO:0007669"/>
    <property type="project" value="TreeGrafter"/>
</dbReference>
<dbReference type="GO" id="GO:0016020">
    <property type="term" value="C:membrane"/>
    <property type="evidence" value="ECO:0007669"/>
    <property type="project" value="GOC"/>
</dbReference>
<dbReference type="GO" id="GO:0000035">
    <property type="term" value="F:acyl binding"/>
    <property type="evidence" value="ECO:0007669"/>
    <property type="project" value="TreeGrafter"/>
</dbReference>
<dbReference type="GO" id="GO:0000036">
    <property type="term" value="F:acyl carrier activity"/>
    <property type="evidence" value="ECO:0007669"/>
    <property type="project" value="UniProtKB-UniRule"/>
</dbReference>
<dbReference type="GO" id="GO:0009245">
    <property type="term" value="P:lipid A biosynthetic process"/>
    <property type="evidence" value="ECO:0007669"/>
    <property type="project" value="TreeGrafter"/>
</dbReference>
<dbReference type="FunFam" id="1.10.1200.10:FF:000003">
    <property type="entry name" value="Acyl carrier protein"/>
    <property type="match status" value="1"/>
</dbReference>
<dbReference type="Gene3D" id="1.10.1200.10">
    <property type="entry name" value="ACP-like"/>
    <property type="match status" value="1"/>
</dbReference>
<dbReference type="HAMAP" id="MF_01217">
    <property type="entry name" value="Acyl_carrier"/>
    <property type="match status" value="1"/>
</dbReference>
<dbReference type="InterPro" id="IPR003231">
    <property type="entry name" value="ACP"/>
</dbReference>
<dbReference type="InterPro" id="IPR036736">
    <property type="entry name" value="ACP-like_sf"/>
</dbReference>
<dbReference type="InterPro" id="IPR009081">
    <property type="entry name" value="PP-bd_ACP"/>
</dbReference>
<dbReference type="InterPro" id="IPR006162">
    <property type="entry name" value="Ppantetheine_attach_site"/>
</dbReference>
<dbReference type="NCBIfam" id="TIGR00517">
    <property type="entry name" value="acyl_carrier"/>
    <property type="match status" value="1"/>
</dbReference>
<dbReference type="NCBIfam" id="NF002148">
    <property type="entry name" value="PRK00982.1-2"/>
    <property type="match status" value="1"/>
</dbReference>
<dbReference type="NCBIfam" id="NF002150">
    <property type="entry name" value="PRK00982.1-4"/>
    <property type="match status" value="1"/>
</dbReference>
<dbReference type="NCBIfam" id="NF002151">
    <property type="entry name" value="PRK00982.1-5"/>
    <property type="match status" value="1"/>
</dbReference>
<dbReference type="PANTHER" id="PTHR20863">
    <property type="entry name" value="ACYL CARRIER PROTEIN"/>
    <property type="match status" value="1"/>
</dbReference>
<dbReference type="PANTHER" id="PTHR20863:SF76">
    <property type="entry name" value="CARRIER DOMAIN-CONTAINING PROTEIN"/>
    <property type="match status" value="1"/>
</dbReference>
<dbReference type="Pfam" id="PF00550">
    <property type="entry name" value="PP-binding"/>
    <property type="match status" value="1"/>
</dbReference>
<dbReference type="SUPFAM" id="SSF47336">
    <property type="entry name" value="ACP-like"/>
    <property type="match status" value="1"/>
</dbReference>
<dbReference type="PROSITE" id="PS50075">
    <property type="entry name" value="CARRIER"/>
    <property type="match status" value="1"/>
</dbReference>
<dbReference type="PROSITE" id="PS00012">
    <property type="entry name" value="PHOSPHOPANTETHEINE"/>
    <property type="match status" value="1"/>
</dbReference>